<keyword id="KW-1185">Reference proteome</keyword>
<keyword id="KW-0687">Ribonucleoprotein</keyword>
<keyword id="KW-0689">Ribosomal protein</keyword>
<keyword id="KW-0694">RNA-binding</keyword>
<keyword id="KW-0699">rRNA-binding</keyword>
<gene>
    <name evidence="1" type="primary">rpsQ</name>
    <name type="ordered locus">Nther_0203</name>
</gene>
<evidence type="ECO:0000255" key="1">
    <source>
        <dbReference type="HAMAP-Rule" id="MF_01345"/>
    </source>
</evidence>
<evidence type="ECO:0000305" key="2"/>
<comment type="function">
    <text evidence="1">One of the primary rRNA binding proteins, it binds specifically to the 5'-end of 16S ribosomal RNA.</text>
</comment>
<comment type="subunit">
    <text evidence="1">Part of the 30S ribosomal subunit.</text>
</comment>
<comment type="similarity">
    <text evidence="1">Belongs to the universal ribosomal protein uS17 family.</text>
</comment>
<accession>B2A4E8</accession>
<proteinExistence type="inferred from homology"/>
<sequence>MERSNRKVRTGRVVSDKMDKTRVVLVEGRTKHPLYEKTVKQAKKFKAHDEANETREGDVVKIMETRPTSKDKRWRIVDIIERTKL</sequence>
<feature type="chain" id="PRO_1000143275" description="Small ribosomal subunit protein uS17">
    <location>
        <begin position="1"/>
        <end position="85"/>
    </location>
</feature>
<dbReference type="EMBL" id="CP001034">
    <property type="protein sequence ID" value="ACB83802.1"/>
    <property type="molecule type" value="Genomic_DNA"/>
</dbReference>
<dbReference type="RefSeq" id="WP_012446691.1">
    <property type="nucleotide sequence ID" value="NC_010718.1"/>
</dbReference>
<dbReference type="SMR" id="B2A4E8"/>
<dbReference type="FunCoup" id="B2A4E8">
    <property type="interactions" value="373"/>
</dbReference>
<dbReference type="STRING" id="457570.Nther_0203"/>
<dbReference type="KEGG" id="nth:Nther_0203"/>
<dbReference type="eggNOG" id="COG0186">
    <property type="taxonomic scope" value="Bacteria"/>
</dbReference>
<dbReference type="HOGENOM" id="CLU_073626_1_0_9"/>
<dbReference type="InParanoid" id="B2A4E8"/>
<dbReference type="OrthoDB" id="9811714at2"/>
<dbReference type="Proteomes" id="UP000001683">
    <property type="component" value="Chromosome"/>
</dbReference>
<dbReference type="GO" id="GO:0022627">
    <property type="term" value="C:cytosolic small ribosomal subunit"/>
    <property type="evidence" value="ECO:0007669"/>
    <property type="project" value="TreeGrafter"/>
</dbReference>
<dbReference type="GO" id="GO:0019843">
    <property type="term" value="F:rRNA binding"/>
    <property type="evidence" value="ECO:0007669"/>
    <property type="project" value="UniProtKB-UniRule"/>
</dbReference>
<dbReference type="GO" id="GO:0003735">
    <property type="term" value="F:structural constituent of ribosome"/>
    <property type="evidence" value="ECO:0007669"/>
    <property type="project" value="InterPro"/>
</dbReference>
<dbReference type="GO" id="GO:0006412">
    <property type="term" value="P:translation"/>
    <property type="evidence" value="ECO:0007669"/>
    <property type="project" value="UniProtKB-UniRule"/>
</dbReference>
<dbReference type="CDD" id="cd00364">
    <property type="entry name" value="Ribosomal_uS17"/>
    <property type="match status" value="1"/>
</dbReference>
<dbReference type="Gene3D" id="2.40.50.140">
    <property type="entry name" value="Nucleic acid-binding proteins"/>
    <property type="match status" value="1"/>
</dbReference>
<dbReference type="HAMAP" id="MF_01345_B">
    <property type="entry name" value="Ribosomal_uS17_B"/>
    <property type="match status" value="1"/>
</dbReference>
<dbReference type="InterPro" id="IPR012340">
    <property type="entry name" value="NA-bd_OB-fold"/>
</dbReference>
<dbReference type="InterPro" id="IPR000266">
    <property type="entry name" value="Ribosomal_uS17"/>
</dbReference>
<dbReference type="InterPro" id="IPR019984">
    <property type="entry name" value="Ribosomal_uS17_bact/chlr"/>
</dbReference>
<dbReference type="NCBIfam" id="NF004123">
    <property type="entry name" value="PRK05610.1"/>
    <property type="match status" value="1"/>
</dbReference>
<dbReference type="NCBIfam" id="TIGR03635">
    <property type="entry name" value="uS17_bact"/>
    <property type="match status" value="1"/>
</dbReference>
<dbReference type="PANTHER" id="PTHR10744">
    <property type="entry name" value="40S RIBOSOMAL PROTEIN S11 FAMILY MEMBER"/>
    <property type="match status" value="1"/>
</dbReference>
<dbReference type="PANTHER" id="PTHR10744:SF1">
    <property type="entry name" value="SMALL RIBOSOMAL SUBUNIT PROTEIN US17M"/>
    <property type="match status" value="1"/>
</dbReference>
<dbReference type="Pfam" id="PF00366">
    <property type="entry name" value="Ribosomal_S17"/>
    <property type="match status" value="1"/>
</dbReference>
<dbReference type="PRINTS" id="PR00973">
    <property type="entry name" value="RIBOSOMALS17"/>
</dbReference>
<dbReference type="SUPFAM" id="SSF50249">
    <property type="entry name" value="Nucleic acid-binding proteins"/>
    <property type="match status" value="1"/>
</dbReference>
<reference key="1">
    <citation type="submission" date="2008-04" db="EMBL/GenBank/DDBJ databases">
        <title>Complete sequence of chromosome of Natranaerobius thermophilus JW/NM-WN-LF.</title>
        <authorList>
            <consortium name="US DOE Joint Genome Institute"/>
            <person name="Copeland A."/>
            <person name="Lucas S."/>
            <person name="Lapidus A."/>
            <person name="Glavina del Rio T."/>
            <person name="Dalin E."/>
            <person name="Tice H."/>
            <person name="Bruce D."/>
            <person name="Goodwin L."/>
            <person name="Pitluck S."/>
            <person name="Chertkov O."/>
            <person name="Brettin T."/>
            <person name="Detter J.C."/>
            <person name="Han C."/>
            <person name="Kuske C.R."/>
            <person name="Schmutz J."/>
            <person name="Larimer F."/>
            <person name="Land M."/>
            <person name="Hauser L."/>
            <person name="Kyrpides N."/>
            <person name="Lykidis A."/>
            <person name="Mesbah N.M."/>
            <person name="Wiegel J."/>
        </authorList>
    </citation>
    <scope>NUCLEOTIDE SEQUENCE [LARGE SCALE GENOMIC DNA]</scope>
    <source>
        <strain>ATCC BAA-1301 / DSM 18059 / JW/NM-WN-LF</strain>
    </source>
</reference>
<protein>
    <recommendedName>
        <fullName evidence="1">Small ribosomal subunit protein uS17</fullName>
    </recommendedName>
    <alternativeName>
        <fullName evidence="2">30S ribosomal protein S17</fullName>
    </alternativeName>
</protein>
<name>RS17_NATTJ</name>
<organism>
    <name type="scientific">Natranaerobius thermophilus (strain ATCC BAA-1301 / DSM 18059 / JW/NM-WN-LF)</name>
    <dbReference type="NCBI Taxonomy" id="457570"/>
    <lineage>
        <taxon>Bacteria</taxon>
        <taxon>Bacillati</taxon>
        <taxon>Bacillota</taxon>
        <taxon>Clostridia</taxon>
        <taxon>Natranaerobiales</taxon>
        <taxon>Natranaerobiaceae</taxon>
        <taxon>Natranaerobius</taxon>
    </lineage>
</organism>